<dbReference type="EMBL" id="CP001025">
    <property type="protein sequence ID" value="ACB63440.1"/>
    <property type="molecule type" value="Genomic_DNA"/>
</dbReference>
<dbReference type="RefSeq" id="WP_006476550.1">
    <property type="nucleotide sequence ID" value="NC_010551.1"/>
</dbReference>
<dbReference type="SMR" id="B1YV57"/>
<dbReference type="GeneID" id="98102517"/>
<dbReference type="KEGG" id="bac:BamMC406_0949"/>
<dbReference type="HOGENOM" id="CLU_100590_5_1_4"/>
<dbReference type="OrthoDB" id="9807878at2"/>
<dbReference type="Proteomes" id="UP000001680">
    <property type="component" value="Chromosome 1"/>
</dbReference>
<dbReference type="GO" id="GO:0005737">
    <property type="term" value="C:cytoplasm"/>
    <property type="evidence" value="ECO:0007669"/>
    <property type="project" value="UniProtKB-ARBA"/>
</dbReference>
<dbReference type="GO" id="GO:0015935">
    <property type="term" value="C:small ribosomal subunit"/>
    <property type="evidence" value="ECO:0007669"/>
    <property type="project" value="TreeGrafter"/>
</dbReference>
<dbReference type="GO" id="GO:0003735">
    <property type="term" value="F:structural constituent of ribosome"/>
    <property type="evidence" value="ECO:0007669"/>
    <property type="project" value="InterPro"/>
</dbReference>
<dbReference type="GO" id="GO:0006412">
    <property type="term" value="P:translation"/>
    <property type="evidence" value="ECO:0007669"/>
    <property type="project" value="UniProtKB-UniRule"/>
</dbReference>
<dbReference type="Gene3D" id="3.30.1320.10">
    <property type="match status" value="1"/>
</dbReference>
<dbReference type="HAMAP" id="MF_00385">
    <property type="entry name" value="Ribosomal_bS16"/>
    <property type="match status" value="1"/>
</dbReference>
<dbReference type="InterPro" id="IPR000307">
    <property type="entry name" value="Ribosomal_bS16"/>
</dbReference>
<dbReference type="InterPro" id="IPR023803">
    <property type="entry name" value="Ribosomal_bS16_dom_sf"/>
</dbReference>
<dbReference type="NCBIfam" id="TIGR00002">
    <property type="entry name" value="S16"/>
    <property type="match status" value="1"/>
</dbReference>
<dbReference type="PANTHER" id="PTHR12919">
    <property type="entry name" value="30S RIBOSOMAL PROTEIN S16"/>
    <property type="match status" value="1"/>
</dbReference>
<dbReference type="PANTHER" id="PTHR12919:SF20">
    <property type="entry name" value="SMALL RIBOSOMAL SUBUNIT PROTEIN BS16M"/>
    <property type="match status" value="1"/>
</dbReference>
<dbReference type="Pfam" id="PF00886">
    <property type="entry name" value="Ribosomal_S16"/>
    <property type="match status" value="1"/>
</dbReference>
<dbReference type="SUPFAM" id="SSF54565">
    <property type="entry name" value="Ribosomal protein S16"/>
    <property type="match status" value="1"/>
</dbReference>
<comment type="similarity">
    <text evidence="1">Belongs to the bacterial ribosomal protein bS16 family.</text>
</comment>
<evidence type="ECO:0000255" key="1">
    <source>
        <dbReference type="HAMAP-Rule" id="MF_00385"/>
    </source>
</evidence>
<evidence type="ECO:0000305" key="2"/>
<reference key="1">
    <citation type="submission" date="2008-04" db="EMBL/GenBank/DDBJ databases">
        <title>Complete sequence of chromosome 1 of Burkholderia ambifaria MC40-6.</title>
        <authorList>
            <person name="Copeland A."/>
            <person name="Lucas S."/>
            <person name="Lapidus A."/>
            <person name="Glavina del Rio T."/>
            <person name="Dalin E."/>
            <person name="Tice H."/>
            <person name="Pitluck S."/>
            <person name="Chain P."/>
            <person name="Malfatti S."/>
            <person name="Shin M."/>
            <person name="Vergez L."/>
            <person name="Lang D."/>
            <person name="Schmutz J."/>
            <person name="Larimer F."/>
            <person name="Land M."/>
            <person name="Hauser L."/>
            <person name="Kyrpides N."/>
            <person name="Lykidis A."/>
            <person name="Ramette A."/>
            <person name="Konstantinidis K."/>
            <person name="Tiedje J."/>
            <person name="Richardson P."/>
        </authorList>
    </citation>
    <scope>NUCLEOTIDE SEQUENCE [LARGE SCALE GENOMIC DNA]</scope>
    <source>
        <strain>MC40-6</strain>
    </source>
</reference>
<gene>
    <name evidence="1" type="primary">rpsP</name>
    <name type="ordered locus">BamMC406_0949</name>
</gene>
<accession>B1YV57</accession>
<sequence>MVIIRLARGGSKKRPFYNIVATDSRNRRDGRFIERVGFYNPVATKGESLRIAQDRLTYWQGVGAQLSPTVQRLVKEAQKAQPAA</sequence>
<proteinExistence type="inferred from homology"/>
<organism>
    <name type="scientific">Burkholderia ambifaria (strain MC40-6)</name>
    <dbReference type="NCBI Taxonomy" id="398577"/>
    <lineage>
        <taxon>Bacteria</taxon>
        <taxon>Pseudomonadati</taxon>
        <taxon>Pseudomonadota</taxon>
        <taxon>Betaproteobacteria</taxon>
        <taxon>Burkholderiales</taxon>
        <taxon>Burkholderiaceae</taxon>
        <taxon>Burkholderia</taxon>
        <taxon>Burkholderia cepacia complex</taxon>
    </lineage>
</organism>
<name>RS16_BURA4</name>
<keyword id="KW-0687">Ribonucleoprotein</keyword>
<keyword id="KW-0689">Ribosomal protein</keyword>
<protein>
    <recommendedName>
        <fullName evidence="1">Small ribosomal subunit protein bS16</fullName>
    </recommendedName>
    <alternativeName>
        <fullName evidence="2">30S ribosomal protein S16</fullName>
    </alternativeName>
</protein>
<feature type="chain" id="PRO_1000196352" description="Small ribosomal subunit protein bS16">
    <location>
        <begin position="1"/>
        <end position="84"/>
    </location>
</feature>